<dbReference type="EMBL" id="CP000285">
    <property type="protein sequence ID" value="ABE57837.1"/>
    <property type="molecule type" value="Genomic_DNA"/>
</dbReference>
<dbReference type="RefSeq" id="WP_011505783.1">
    <property type="nucleotide sequence ID" value="NC_007963.1"/>
</dbReference>
<dbReference type="SMR" id="Q1R0C1"/>
<dbReference type="STRING" id="290398.Csal_0475"/>
<dbReference type="GeneID" id="95333228"/>
<dbReference type="KEGG" id="csa:Csal_0475"/>
<dbReference type="eggNOG" id="COG0211">
    <property type="taxonomic scope" value="Bacteria"/>
</dbReference>
<dbReference type="HOGENOM" id="CLU_095424_4_1_6"/>
<dbReference type="OrthoDB" id="9803474at2"/>
<dbReference type="Proteomes" id="UP000000239">
    <property type="component" value="Chromosome"/>
</dbReference>
<dbReference type="GO" id="GO:0022625">
    <property type="term" value="C:cytosolic large ribosomal subunit"/>
    <property type="evidence" value="ECO:0007669"/>
    <property type="project" value="TreeGrafter"/>
</dbReference>
<dbReference type="GO" id="GO:0003735">
    <property type="term" value="F:structural constituent of ribosome"/>
    <property type="evidence" value="ECO:0007669"/>
    <property type="project" value="InterPro"/>
</dbReference>
<dbReference type="GO" id="GO:0006412">
    <property type="term" value="P:translation"/>
    <property type="evidence" value="ECO:0007669"/>
    <property type="project" value="UniProtKB-UniRule"/>
</dbReference>
<dbReference type="FunFam" id="2.40.50.100:FF:000001">
    <property type="entry name" value="50S ribosomal protein L27"/>
    <property type="match status" value="1"/>
</dbReference>
<dbReference type="Gene3D" id="2.40.50.100">
    <property type="match status" value="1"/>
</dbReference>
<dbReference type="HAMAP" id="MF_00539">
    <property type="entry name" value="Ribosomal_bL27"/>
    <property type="match status" value="1"/>
</dbReference>
<dbReference type="InterPro" id="IPR001684">
    <property type="entry name" value="Ribosomal_bL27"/>
</dbReference>
<dbReference type="InterPro" id="IPR018261">
    <property type="entry name" value="Ribosomal_bL27_CS"/>
</dbReference>
<dbReference type="NCBIfam" id="TIGR00062">
    <property type="entry name" value="L27"/>
    <property type="match status" value="1"/>
</dbReference>
<dbReference type="PANTHER" id="PTHR15893:SF0">
    <property type="entry name" value="LARGE RIBOSOMAL SUBUNIT PROTEIN BL27M"/>
    <property type="match status" value="1"/>
</dbReference>
<dbReference type="PANTHER" id="PTHR15893">
    <property type="entry name" value="RIBOSOMAL PROTEIN L27"/>
    <property type="match status" value="1"/>
</dbReference>
<dbReference type="Pfam" id="PF01016">
    <property type="entry name" value="Ribosomal_L27"/>
    <property type="match status" value="1"/>
</dbReference>
<dbReference type="PRINTS" id="PR00063">
    <property type="entry name" value="RIBOSOMALL27"/>
</dbReference>
<dbReference type="SUPFAM" id="SSF110324">
    <property type="entry name" value="Ribosomal L27 protein-like"/>
    <property type="match status" value="1"/>
</dbReference>
<dbReference type="PROSITE" id="PS00831">
    <property type="entry name" value="RIBOSOMAL_L27"/>
    <property type="match status" value="1"/>
</dbReference>
<name>RL27_CHRSD</name>
<reference key="1">
    <citation type="journal article" date="2011" name="Stand. Genomic Sci.">
        <title>Complete genome sequence of the halophilic and highly halotolerant Chromohalobacter salexigens type strain (1H11(T)).</title>
        <authorList>
            <person name="Copeland A."/>
            <person name="O'Connor K."/>
            <person name="Lucas S."/>
            <person name="Lapidus A."/>
            <person name="Berry K.W."/>
            <person name="Detter J.C."/>
            <person name="Del Rio T.G."/>
            <person name="Hammon N."/>
            <person name="Dalin E."/>
            <person name="Tice H."/>
            <person name="Pitluck S."/>
            <person name="Bruce D."/>
            <person name="Goodwin L."/>
            <person name="Han C."/>
            <person name="Tapia R."/>
            <person name="Saunders E."/>
            <person name="Schmutz J."/>
            <person name="Brettin T."/>
            <person name="Larimer F."/>
            <person name="Land M."/>
            <person name="Hauser L."/>
            <person name="Vargas C."/>
            <person name="Nieto J.J."/>
            <person name="Kyrpides N.C."/>
            <person name="Ivanova N."/>
            <person name="Goker M."/>
            <person name="Klenk H.P."/>
            <person name="Csonka L.N."/>
            <person name="Woyke T."/>
        </authorList>
    </citation>
    <scope>NUCLEOTIDE SEQUENCE [LARGE SCALE GENOMIC DNA]</scope>
    <source>
        <strain>ATCC BAA-138 / DSM 3043 / CIP 106854 / NCIMB 13768 / 1H11</strain>
    </source>
</reference>
<accession>Q1R0C1</accession>
<evidence type="ECO:0000255" key="1">
    <source>
        <dbReference type="HAMAP-Rule" id="MF_00539"/>
    </source>
</evidence>
<evidence type="ECO:0000256" key="2">
    <source>
        <dbReference type="SAM" id="MobiDB-lite"/>
    </source>
</evidence>
<evidence type="ECO:0000305" key="3"/>
<gene>
    <name evidence="1" type="primary">rpmA</name>
    <name type="ordered locus">Csal_0475</name>
</gene>
<comment type="similarity">
    <text evidence="1">Belongs to the bacterial ribosomal protein bL27 family.</text>
</comment>
<feature type="chain" id="PRO_1000017450" description="Large ribosomal subunit protein bL27">
    <location>
        <begin position="1"/>
        <end position="85"/>
    </location>
</feature>
<feature type="region of interest" description="Disordered" evidence="2">
    <location>
        <begin position="1"/>
        <end position="21"/>
    </location>
</feature>
<proteinExistence type="inferred from homology"/>
<protein>
    <recommendedName>
        <fullName evidence="1">Large ribosomal subunit protein bL27</fullName>
    </recommendedName>
    <alternativeName>
        <fullName evidence="3">50S ribosomal protein L27</fullName>
    </alternativeName>
</protein>
<organism>
    <name type="scientific">Chromohalobacter salexigens (strain ATCC BAA-138 / DSM 3043 / CIP 106854 / NCIMB 13768 / 1H11)</name>
    <dbReference type="NCBI Taxonomy" id="290398"/>
    <lineage>
        <taxon>Bacteria</taxon>
        <taxon>Pseudomonadati</taxon>
        <taxon>Pseudomonadota</taxon>
        <taxon>Gammaproteobacteria</taxon>
        <taxon>Oceanospirillales</taxon>
        <taxon>Halomonadaceae</taxon>
        <taxon>Chromohalobacter</taxon>
    </lineage>
</organism>
<keyword id="KW-1185">Reference proteome</keyword>
<keyword id="KW-0687">Ribonucleoprotein</keyword>
<keyword id="KW-0689">Ribosomal protein</keyword>
<sequence>MAHKKAAGSSRNGRDSESKRLGVKLFGGQAATAGNIIVRQRGTKFHAGSGVGIGKDHTLFALNDGVIKFETKGPKNRKFVSVVSA</sequence>